<name>VSP4_CROAD</name>
<evidence type="ECO:0000250" key="1"/>
<evidence type="ECO:0000255" key="2"/>
<evidence type="ECO:0000255" key="3">
    <source>
        <dbReference type="PROSITE-ProRule" id="PRU00274"/>
    </source>
</evidence>
<keyword id="KW-1015">Disulfide bond</keyword>
<keyword id="KW-0325">Glycoprotein</keyword>
<keyword id="KW-1199">Hemostasis impairing toxin</keyword>
<keyword id="KW-0378">Hydrolase</keyword>
<keyword id="KW-0645">Protease</keyword>
<keyword id="KW-0964">Secreted</keyword>
<keyword id="KW-0720">Serine protease</keyword>
<keyword id="KW-0732">Signal</keyword>
<keyword id="KW-0800">Toxin</keyword>
<keyword id="KW-0865">Zymogen</keyword>
<protein>
    <recommendedName>
        <fullName>Snake venom serine proteinase 4a</fullName>
        <shortName>SVSP</shortName>
        <ecNumber>3.4.21.-</ecNumber>
    </recommendedName>
</protein>
<proteinExistence type="evidence at protein level"/>
<sequence>MVLIRVLANLLILQLSYAQMSSELVTGGDECNRNEHRFLVALYDPDRFLCGGTLLNEEWVLTAAHCDRRNMWIKLGMHSKTVPNEDEQRRVPKEKFFCLSTKNYTLWDKDIMLIRLDSPVSNSEHIAPLSLPSSPPSVGSVCRIMGWGTISSNKETYPNVPHCANINILDYEVCLAAYPEFVLPATSRTLCAGILEGGKDSCKGDSGGPLICNGQFQGILSWGNDVCGYILQPALYTRVFDHLDWIQRIIAGNTDATCPP</sequence>
<feature type="signal peptide" evidence="2">
    <location>
        <begin position="1"/>
        <end position="18"/>
    </location>
</feature>
<feature type="propeptide" id="PRO_0000425636" evidence="1">
    <location>
        <begin position="19"/>
        <end position="24"/>
    </location>
</feature>
<feature type="chain" id="PRO_0000425637" description="Snake venom serine proteinase 4a">
    <location>
        <begin position="25"/>
        <end position="260"/>
    </location>
</feature>
<feature type="domain" description="Peptidase S1" evidence="3">
    <location>
        <begin position="25"/>
        <end position="251"/>
    </location>
</feature>
<feature type="active site" description="Charge relay system" evidence="1">
    <location>
        <position position="65"/>
    </location>
</feature>
<feature type="active site" description="Charge relay system" evidence="1">
    <location>
        <position position="110"/>
    </location>
</feature>
<feature type="active site" description="Charge relay system" evidence="1">
    <location>
        <position position="206"/>
    </location>
</feature>
<feature type="glycosylation site" description="N-linked (GlcNAc...) asparagine" evidence="2">
    <location>
        <position position="103"/>
    </location>
</feature>
<feature type="disulfide bond" evidence="3">
    <location>
        <begin position="31"/>
        <end position="163"/>
    </location>
</feature>
<feature type="disulfide bond" evidence="3">
    <location>
        <begin position="50"/>
        <end position="66"/>
    </location>
</feature>
<feature type="disulfide bond" evidence="3">
    <location>
        <begin position="98"/>
        <end position="258"/>
    </location>
</feature>
<feature type="disulfide bond" evidence="3">
    <location>
        <begin position="142"/>
        <end position="212"/>
    </location>
</feature>
<feature type="disulfide bond" evidence="3">
    <location>
        <begin position="174"/>
        <end position="191"/>
    </location>
</feature>
<feature type="disulfide bond" evidence="3">
    <location>
        <begin position="202"/>
        <end position="227"/>
    </location>
</feature>
<accession>J3SDX0</accession>
<dbReference type="EC" id="3.4.21.-"/>
<dbReference type="EMBL" id="JU173730">
    <property type="protein sequence ID" value="AFJ49256.1"/>
    <property type="molecule type" value="mRNA"/>
</dbReference>
<dbReference type="SMR" id="J3SDX0"/>
<dbReference type="GO" id="GO:0005576">
    <property type="term" value="C:extracellular region"/>
    <property type="evidence" value="ECO:0007669"/>
    <property type="project" value="UniProtKB-SubCell"/>
</dbReference>
<dbReference type="GO" id="GO:0030141">
    <property type="term" value="C:secretory granule"/>
    <property type="evidence" value="ECO:0007669"/>
    <property type="project" value="TreeGrafter"/>
</dbReference>
<dbReference type="GO" id="GO:0004252">
    <property type="term" value="F:serine-type endopeptidase activity"/>
    <property type="evidence" value="ECO:0007669"/>
    <property type="project" value="InterPro"/>
</dbReference>
<dbReference type="GO" id="GO:0090729">
    <property type="term" value="F:toxin activity"/>
    <property type="evidence" value="ECO:0007669"/>
    <property type="project" value="UniProtKB-KW"/>
</dbReference>
<dbReference type="GO" id="GO:0006508">
    <property type="term" value="P:proteolysis"/>
    <property type="evidence" value="ECO:0007669"/>
    <property type="project" value="UniProtKB-KW"/>
</dbReference>
<dbReference type="CDD" id="cd00190">
    <property type="entry name" value="Tryp_SPc"/>
    <property type="match status" value="1"/>
</dbReference>
<dbReference type="FunFam" id="2.40.10.10:FF:000158">
    <property type="entry name" value="Thrombin-like enzyme saxthrombin"/>
    <property type="match status" value="1"/>
</dbReference>
<dbReference type="FunFam" id="2.40.10.10:FF:000153">
    <property type="entry name" value="Venom plasminogen activator TSV-PA"/>
    <property type="match status" value="1"/>
</dbReference>
<dbReference type="Gene3D" id="2.40.10.10">
    <property type="entry name" value="Trypsin-like serine proteases"/>
    <property type="match status" value="2"/>
</dbReference>
<dbReference type="InterPro" id="IPR009003">
    <property type="entry name" value="Peptidase_S1_PA"/>
</dbReference>
<dbReference type="InterPro" id="IPR043504">
    <property type="entry name" value="Peptidase_S1_PA_chymotrypsin"/>
</dbReference>
<dbReference type="InterPro" id="IPR001314">
    <property type="entry name" value="Peptidase_S1A"/>
</dbReference>
<dbReference type="InterPro" id="IPR001254">
    <property type="entry name" value="Trypsin_dom"/>
</dbReference>
<dbReference type="InterPro" id="IPR018114">
    <property type="entry name" value="TRYPSIN_HIS"/>
</dbReference>
<dbReference type="InterPro" id="IPR033116">
    <property type="entry name" value="TRYPSIN_SER"/>
</dbReference>
<dbReference type="PANTHER" id="PTHR24271:SF47">
    <property type="entry name" value="KALLIKREIN-1"/>
    <property type="match status" value="1"/>
</dbReference>
<dbReference type="PANTHER" id="PTHR24271">
    <property type="entry name" value="KALLIKREIN-RELATED"/>
    <property type="match status" value="1"/>
</dbReference>
<dbReference type="Pfam" id="PF00089">
    <property type="entry name" value="Trypsin"/>
    <property type="match status" value="1"/>
</dbReference>
<dbReference type="PRINTS" id="PR00722">
    <property type="entry name" value="CHYMOTRYPSIN"/>
</dbReference>
<dbReference type="SMART" id="SM00020">
    <property type="entry name" value="Tryp_SPc"/>
    <property type="match status" value="1"/>
</dbReference>
<dbReference type="SUPFAM" id="SSF50494">
    <property type="entry name" value="Trypsin-like serine proteases"/>
    <property type="match status" value="1"/>
</dbReference>
<dbReference type="PROSITE" id="PS50240">
    <property type="entry name" value="TRYPSIN_DOM"/>
    <property type="match status" value="1"/>
</dbReference>
<dbReference type="PROSITE" id="PS00134">
    <property type="entry name" value="TRYPSIN_HIS"/>
    <property type="match status" value="1"/>
</dbReference>
<dbReference type="PROSITE" id="PS00135">
    <property type="entry name" value="TRYPSIN_SER"/>
    <property type="match status" value="1"/>
</dbReference>
<organism>
    <name type="scientific">Crotalus adamanteus</name>
    <name type="common">Eastern diamondback rattlesnake</name>
    <dbReference type="NCBI Taxonomy" id="8729"/>
    <lineage>
        <taxon>Eukaryota</taxon>
        <taxon>Metazoa</taxon>
        <taxon>Chordata</taxon>
        <taxon>Craniata</taxon>
        <taxon>Vertebrata</taxon>
        <taxon>Euteleostomi</taxon>
        <taxon>Lepidosauria</taxon>
        <taxon>Squamata</taxon>
        <taxon>Bifurcata</taxon>
        <taxon>Unidentata</taxon>
        <taxon>Episquamata</taxon>
        <taxon>Toxicofera</taxon>
        <taxon>Serpentes</taxon>
        <taxon>Colubroidea</taxon>
        <taxon>Viperidae</taxon>
        <taxon>Crotalinae</taxon>
        <taxon>Crotalus</taxon>
    </lineage>
</organism>
<reference key="1">
    <citation type="journal article" date="2012" name="BMC Genomics">
        <title>The venom-gland transcriptome of the eastern diamondback rattlesnake (Crotalus adamanteus).</title>
        <authorList>
            <person name="Rokyta D.R."/>
            <person name="Lemmon A.R."/>
            <person name="Margres M.J."/>
            <person name="Aronow K."/>
        </authorList>
    </citation>
    <scope>NUCLEOTIDE SEQUENCE [MRNA]</scope>
    <source>
        <tissue>Venom gland</tissue>
    </source>
</reference>
<reference key="2">
    <citation type="journal article" date="2014" name="J. Proteomics">
        <title>Linking the transcriptome and proteome to characterize the venom of the eastern diamondback rattlesnake (Crotalus adamanteus).</title>
        <authorList>
            <person name="Margres M.J."/>
            <person name="McGivern J.J."/>
            <person name="Wray K.P."/>
            <person name="Seavy M."/>
            <person name="Calvin K."/>
            <person name="Rokyta D.R."/>
        </authorList>
    </citation>
    <scope>IDENTIFICATION BY MASS SPECTROMETRY</scope>
    <source>
        <tissue>Venom</tissue>
    </source>
</reference>
<comment type="function">
    <text evidence="1">Snake venom serine protease that may act in the hemostasis system of the prey.</text>
</comment>
<comment type="subunit">
    <text evidence="1">Monomer.</text>
</comment>
<comment type="subcellular location">
    <subcellularLocation>
        <location>Secreted</location>
    </subcellularLocation>
</comment>
<comment type="tissue specificity">
    <text>Expressed by the venom gland.</text>
</comment>
<comment type="similarity">
    <text evidence="3">Belongs to the peptidase S1 family. Snake venom subfamily.</text>
</comment>